<evidence type="ECO:0000255" key="1">
    <source>
        <dbReference type="HAMAP-Rule" id="MF_01302"/>
    </source>
</evidence>
<evidence type="ECO:0000305" key="2"/>
<gene>
    <name evidence="1" type="primary">rpsH</name>
    <name type="ordered locus">SRU_1049</name>
</gene>
<dbReference type="EMBL" id="CP000159">
    <property type="protein sequence ID" value="ABC45281.1"/>
    <property type="molecule type" value="Genomic_DNA"/>
</dbReference>
<dbReference type="RefSeq" id="WP_011403809.1">
    <property type="nucleotide sequence ID" value="NC_007677.1"/>
</dbReference>
<dbReference type="RefSeq" id="YP_445181.1">
    <property type="nucleotide sequence ID" value="NC_007677.1"/>
</dbReference>
<dbReference type="SMR" id="Q2S3Q0"/>
<dbReference type="STRING" id="309807.SRU_1049"/>
<dbReference type="EnsemblBacteria" id="ABC45281">
    <property type="protein sequence ID" value="ABC45281"/>
    <property type="gene ID" value="SRU_1049"/>
</dbReference>
<dbReference type="GeneID" id="83727978"/>
<dbReference type="KEGG" id="sru:SRU_1049"/>
<dbReference type="PATRIC" id="fig|309807.25.peg.1087"/>
<dbReference type="eggNOG" id="COG0096">
    <property type="taxonomic scope" value="Bacteria"/>
</dbReference>
<dbReference type="HOGENOM" id="CLU_098428_0_2_10"/>
<dbReference type="OrthoDB" id="9802617at2"/>
<dbReference type="Proteomes" id="UP000008674">
    <property type="component" value="Chromosome"/>
</dbReference>
<dbReference type="GO" id="GO:1990904">
    <property type="term" value="C:ribonucleoprotein complex"/>
    <property type="evidence" value="ECO:0007669"/>
    <property type="project" value="UniProtKB-KW"/>
</dbReference>
<dbReference type="GO" id="GO:0005840">
    <property type="term" value="C:ribosome"/>
    <property type="evidence" value="ECO:0007669"/>
    <property type="project" value="UniProtKB-KW"/>
</dbReference>
<dbReference type="GO" id="GO:0019843">
    <property type="term" value="F:rRNA binding"/>
    <property type="evidence" value="ECO:0007669"/>
    <property type="project" value="UniProtKB-UniRule"/>
</dbReference>
<dbReference type="GO" id="GO:0003735">
    <property type="term" value="F:structural constituent of ribosome"/>
    <property type="evidence" value="ECO:0007669"/>
    <property type="project" value="InterPro"/>
</dbReference>
<dbReference type="GO" id="GO:0006412">
    <property type="term" value="P:translation"/>
    <property type="evidence" value="ECO:0007669"/>
    <property type="project" value="UniProtKB-UniRule"/>
</dbReference>
<dbReference type="FunFam" id="3.30.1490.10:FF:000001">
    <property type="entry name" value="30S ribosomal protein S8"/>
    <property type="match status" value="1"/>
</dbReference>
<dbReference type="Gene3D" id="3.30.1370.30">
    <property type="match status" value="1"/>
</dbReference>
<dbReference type="Gene3D" id="3.30.1490.10">
    <property type="match status" value="1"/>
</dbReference>
<dbReference type="HAMAP" id="MF_01302_B">
    <property type="entry name" value="Ribosomal_uS8_B"/>
    <property type="match status" value="1"/>
</dbReference>
<dbReference type="InterPro" id="IPR000630">
    <property type="entry name" value="Ribosomal_uS8"/>
</dbReference>
<dbReference type="InterPro" id="IPR047863">
    <property type="entry name" value="Ribosomal_uS8_CS"/>
</dbReference>
<dbReference type="InterPro" id="IPR035987">
    <property type="entry name" value="Ribosomal_uS8_sf"/>
</dbReference>
<dbReference type="NCBIfam" id="NF001109">
    <property type="entry name" value="PRK00136.1"/>
    <property type="match status" value="1"/>
</dbReference>
<dbReference type="PANTHER" id="PTHR11758">
    <property type="entry name" value="40S RIBOSOMAL PROTEIN S15A"/>
    <property type="match status" value="1"/>
</dbReference>
<dbReference type="Pfam" id="PF00410">
    <property type="entry name" value="Ribosomal_S8"/>
    <property type="match status" value="1"/>
</dbReference>
<dbReference type="SUPFAM" id="SSF56047">
    <property type="entry name" value="Ribosomal protein S8"/>
    <property type="match status" value="1"/>
</dbReference>
<dbReference type="PROSITE" id="PS00053">
    <property type="entry name" value="RIBOSOMAL_S8"/>
    <property type="match status" value="1"/>
</dbReference>
<accession>Q2S3Q0</accession>
<protein>
    <recommendedName>
        <fullName evidence="1">Small ribosomal subunit protein uS8</fullName>
    </recommendedName>
    <alternativeName>
        <fullName evidence="2">30S ribosomal protein S8</fullName>
    </alternativeName>
</protein>
<proteinExistence type="inferred from homology"/>
<organism>
    <name type="scientific">Salinibacter ruber (strain DSM 13855 / M31)</name>
    <dbReference type="NCBI Taxonomy" id="309807"/>
    <lineage>
        <taxon>Bacteria</taxon>
        <taxon>Pseudomonadati</taxon>
        <taxon>Rhodothermota</taxon>
        <taxon>Rhodothermia</taxon>
        <taxon>Rhodothermales</taxon>
        <taxon>Salinibacteraceae</taxon>
        <taxon>Salinibacter</taxon>
    </lineage>
</organism>
<comment type="function">
    <text evidence="1">One of the primary rRNA binding proteins, it binds directly to 16S rRNA central domain where it helps coordinate assembly of the platform of the 30S subunit.</text>
</comment>
<comment type="subunit">
    <text evidence="1">Part of the 30S ribosomal subunit. Contacts proteins S5 and S12.</text>
</comment>
<comment type="similarity">
    <text evidence="1">Belongs to the universal ribosomal protein uS8 family.</text>
</comment>
<sequence length="133" mass="15046">MSGISDPVSNYMAQLRNAQEAEQTYVDIPASKLKRAMTQILLEKGYIKNFVNIDDEKQGLLRVYLKYDEYDQPAIRMLERVSRPGRREYADSDNLPEVKNGLGIVILSTSRGVMSDKEARRFGVGGEVLAKVF</sequence>
<name>RS8_SALRD</name>
<feature type="chain" id="PRO_0000290924" description="Small ribosomal subunit protein uS8">
    <location>
        <begin position="1"/>
        <end position="133"/>
    </location>
</feature>
<keyword id="KW-1185">Reference proteome</keyword>
<keyword id="KW-0687">Ribonucleoprotein</keyword>
<keyword id="KW-0689">Ribosomal protein</keyword>
<keyword id="KW-0694">RNA-binding</keyword>
<keyword id="KW-0699">rRNA-binding</keyword>
<reference key="1">
    <citation type="journal article" date="2005" name="Proc. Natl. Acad. Sci. U.S.A.">
        <title>The genome of Salinibacter ruber: convergence and gene exchange among hyperhalophilic bacteria and archaea.</title>
        <authorList>
            <person name="Mongodin E.F."/>
            <person name="Nelson K.E."/>
            <person name="Daugherty S."/>
            <person name="DeBoy R.T."/>
            <person name="Wister J."/>
            <person name="Khouri H."/>
            <person name="Weidman J."/>
            <person name="Walsh D.A."/>
            <person name="Papke R.T."/>
            <person name="Sanchez Perez G."/>
            <person name="Sharma A.K."/>
            <person name="Nesbo C.L."/>
            <person name="MacLeod D."/>
            <person name="Bapteste E."/>
            <person name="Doolittle W.F."/>
            <person name="Charlebois R.L."/>
            <person name="Legault B."/>
            <person name="Rodriguez-Valera F."/>
        </authorList>
    </citation>
    <scope>NUCLEOTIDE SEQUENCE [LARGE SCALE GENOMIC DNA]</scope>
    <source>
        <strain>DSM 13855 / CECT 5946 / M31</strain>
    </source>
</reference>